<accession>C0HLC1</accession>
<evidence type="ECO:0000250" key="1">
    <source>
        <dbReference type="UniProtKB" id="P84921"/>
    </source>
</evidence>
<evidence type="ECO:0000269" key="2">
    <source>
    </source>
</evidence>
<evidence type="ECO:0000303" key="3">
    <source>
    </source>
</evidence>
<evidence type="ECO:0000305" key="4"/>
<evidence type="ECO:0000305" key="5">
    <source>
    </source>
</evidence>
<sequence>GLWSKIKETGKEAAKAAGKAALDKIAEAV</sequence>
<feature type="peptide" id="PRO_0000445210" description="Dermaseptin-1.2TR" evidence="2">
    <location>
        <begin position="1"/>
        <end position="29"/>
    </location>
</feature>
<feature type="modified residue" description="Valine amide" evidence="2">
    <location>
        <position position="29"/>
    </location>
</feature>
<comment type="function">
    <text evidence="1">Has antimicrobial activity.</text>
</comment>
<comment type="subcellular location">
    <subcellularLocation>
        <location evidence="2">Secreted</location>
    </subcellularLocation>
</comment>
<comment type="tissue specificity">
    <text evidence="5">Expressed by the skin glands.</text>
</comment>
<comment type="mass spectrometry"/>
<comment type="similarity">
    <text evidence="4">Belongs to the frog skin active peptide (FSAP) family. Dermaseptin subfamily.</text>
</comment>
<keyword id="KW-0027">Amidation</keyword>
<keyword id="KW-0878">Amphibian defense peptide</keyword>
<keyword id="KW-0929">Antimicrobial</keyword>
<keyword id="KW-0903">Direct protein sequencing</keyword>
<keyword id="KW-0964">Secreted</keyword>
<protein>
    <recommendedName>
        <fullName evidence="3">Dermaseptin-1.2TR</fullName>
    </recommendedName>
</protein>
<dbReference type="SMR" id="C0HLC1"/>
<dbReference type="GO" id="GO:0005576">
    <property type="term" value="C:extracellular region"/>
    <property type="evidence" value="ECO:0007669"/>
    <property type="project" value="UniProtKB-SubCell"/>
</dbReference>
<dbReference type="GO" id="GO:0006952">
    <property type="term" value="P:defense response"/>
    <property type="evidence" value="ECO:0007669"/>
    <property type="project" value="UniProtKB-KW"/>
</dbReference>
<dbReference type="InterPro" id="IPR022731">
    <property type="entry name" value="Dermaseptin_dom"/>
</dbReference>
<dbReference type="Pfam" id="PF12121">
    <property type="entry name" value="DD_K"/>
    <property type="match status" value="1"/>
</dbReference>
<proteinExistence type="evidence at protein level"/>
<reference evidence="4" key="1">
    <citation type="journal article" date="2018" name="Comp. Biochem. Physiol.">
        <title>Peptidomic analysis of the host-defense peptides in skin secretions of the Trinidadian leaf frog Phyllomedusa trinitatis (Phyllomedusidae).</title>
        <authorList>
            <person name="Mechkarska M."/>
            <person name="Coquet L."/>
            <person name="Leprince J."/>
            <person name="Auguste R.J."/>
            <person name="Jouenne T."/>
            <person name="Mangoni M.L."/>
            <person name="Conlon J.M."/>
        </authorList>
    </citation>
    <scope>PROTEIN SEQUENCE</scope>
    <scope>SUBCELLULAR LOCATION</scope>
    <scope>MASS SPECTROMETRY</scope>
    <scope>AMIDATION AT VAL-29</scope>
    <source>
        <tissue evidence="3">Skin secretion</tissue>
    </source>
</reference>
<name>DRS12_PHYTB</name>
<organism evidence="3">
    <name type="scientific">Phyllomedusa trinitatis</name>
    <name type="common">Trinidad leaf frog</name>
    <dbReference type="NCBI Taxonomy" id="332092"/>
    <lineage>
        <taxon>Eukaryota</taxon>
        <taxon>Metazoa</taxon>
        <taxon>Chordata</taxon>
        <taxon>Craniata</taxon>
        <taxon>Vertebrata</taxon>
        <taxon>Euteleostomi</taxon>
        <taxon>Amphibia</taxon>
        <taxon>Batrachia</taxon>
        <taxon>Anura</taxon>
        <taxon>Neobatrachia</taxon>
        <taxon>Hyloidea</taxon>
        <taxon>Hylidae</taxon>
        <taxon>Phyllomedusinae</taxon>
        <taxon>Phyllomedusa</taxon>
    </lineage>
</organism>